<accession>O83534</accession>
<feature type="chain" id="PRO_0000202269" description="Uncharacterized protein TP_0522">
    <location>
        <begin position="1"/>
        <end position="159"/>
    </location>
</feature>
<feature type="transmembrane region" description="Helical" evidence="1">
    <location>
        <begin position="5"/>
        <end position="27"/>
    </location>
</feature>
<feature type="transmembrane region" description="Helical" evidence="1">
    <location>
        <begin position="34"/>
        <end position="51"/>
    </location>
</feature>
<feature type="transmembrane region" description="Helical" evidence="1">
    <location>
        <begin position="61"/>
        <end position="83"/>
    </location>
</feature>
<feature type="transmembrane region" description="Helical" evidence="1">
    <location>
        <begin position="103"/>
        <end position="125"/>
    </location>
</feature>
<comment type="subcellular location">
    <subcellularLocation>
        <location evidence="2">Cell membrane</location>
        <topology evidence="2">Multi-pass membrane protein</topology>
    </subcellularLocation>
</comment>
<name>Y522_TREPA</name>
<reference key="1">
    <citation type="journal article" date="1998" name="Science">
        <title>Complete genome sequence of Treponema pallidum, the syphilis spirochete.</title>
        <authorList>
            <person name="Fraser C.M."/>
            <person name="Norris S.J."/>
            <person name="Weinstock G.M."/>
            <person name="White O."/>
            <person name="Sutton G.G."/>
            <person name="Dodson R.J."/>
            <person name="Gwinn M.L."/>
            <person name="Hickey E.K."/>
            <person name="Clayton R.A."/>
            <person name="Ketchum K.A."/>
            <person name="Sodergren E."/>
            <person name="Hardham J.M."/>
            <person name="McLeod M.P."/>
            <person name="Salzberg S.L."/>
            <person name="Peterson J.D."/>
            <person name="Khalak H.G."/>
            <person name="Richardson D.L."/>
            <person name="Howell J.K."/>
            <person name="Chidambaram M."/>
            <person name="Utterback T.R."/>
            <person name="McDonald L.A."/>
            <person name="Artiach P."/>
            <person name="Bowman C."/>
            <person name="Cotton M.D."/>
            <person name="Fujii C."/>
            <person name="Garland S.A."/>
            <person name="Hatch B."/>
            <person name="Horst K."/>
            <person name="Roberts K.M."/>
            <person name="Sandusky M."/>
            <person name="Weidman J.F."/>
            <person name="Smith H.O."/>
            <person name="Venter J.C."/>
        </authorList>
    </citation>
    <scope>NUCLEOTIDE SEQUENCE [LARGE SCALE GENOMIC DNA]</scope>
    <source>
        <strain>Nichols</strain>
    </source>
</reference>
<sequence length="159" mass="17810">MTISTLDLILGIIMGIVTVRATMRGFVDEFFSKASILCAAVVAILCHKRLVPLTRVLLGHSILLPCITFLITFMGVYCVMLFLRSRMRTYATRDLISGFNQVFGFFFGIIEGSVLLTVILLLLHVQPFVSVSHMLHESVINTVLSPLVLDGVRYMRLKM</sequence>
<keyword id="KW-1003">Cell membrane</keyword>
<keyword id="KW-0472">Membrane</keyword>
<keyword id="KW-1185">Reference proteome</keyword>
<keyword id="KW-0812">Transmembrane</keyword>
<keyword id="KW-1133">Transmembrane helix</keyword>
<dbReference type="EMBL" id="AE000520">
    <property type="protein sequence ID" value="AAC65511.1"/>
    <property type="molecule type" value="Genomic_DNA"/>
</dbReference>
<dbReference type="PIR" id="H71315">
    <property type="entry name" value="H71315"/>
</dbReference>
<dbReference type="RefSeq" id="WP_010881970.1">
    <property type="nucleotide sequence ID" value="NC_021490.2"/>
</dbReference>
<dbReference type="IntAct" id="O83534">
    <property type="interactions" value="1"/>
</dbReference>
<dbReference type="STRING" id="243276.TP_0522"/>
<dbReference type="EnsemblBacteria" id="AAC65511">
    <property type="protein sequence ID" value="AAC65511"/>
    <property type="gene ID" value="TP_0522"/>
</dbReference>
<dbReference type="KEGG" id="tpa:TP_0522"/>
<dbReference type="KEGG" id="tpw:TPANIC_0522"/>
<dbReference type="eggNOG" id="COG1286">
    <property type="taxonomic scope" value="Bacteria"/>
</dbReference>
<dbReference type="HOGENOM" id="CLU_129914_0_0_12"/>
<dbReference type="OrthoDB" id="361105at2"/>
<dbReference type="Proteomes" id="UP000000811">
    <property type="component" value="Chromosome"/>
</dbReference>
<dbReference type="GO" id="GO:0005886">
    <property type="term" value="C:plasma membrane"/>
    <property type="evidence" value="ECO:0007669"/>
    <property type="project" value="UniProtKB-SubCell"/>
</dbReference>
<dbReference type="GO" id="GO:0009403">
    <property type="term" value="P:toxin biosynthetic process"/>
    <property type="evidence" value="ECO:0007669"/>
    <property type="project" value="InterPro"/>
</dbReference>
<dbReference type="InterPro" id="IPR003825">
    <property type="entry name" value="Colicin-V_CvpA"/>
</dbReference>
<dbReference type="PANTHER" id="PTHR37306">
    <property type="entry name" value="COLICIN V PRODUCTION PROTEIN"/>
    <property type="match status" value="1"/>
</dbReference>
<dbReference type="PANTHER" id="PTHR37306:SF1">
    <property type="entry name" value="COLICIN V PRODUCTION PROTEIN"/>
    <property type="match status" value="1"/>
</dbReference>
<dbReference type="Pfam" id="PF02674">
    <property type="entry name" value="Colicin_V"/>
    <property type="match status" value="1"/>
</dbReference>
<evidence type="ECO:0000255" key="1"/>
<evidence type="ECO:0000305" key="2"/>
<proteinExistence type="predicted"/>
<protein>
    <recommendedName>
        <fullName>Uncharacterized protein TP_0522</fullName>
    </recommendedName>
</protein>
<gene>
    <name type="ordered locus">TP_0522</name>
</gene>
<organism>
    <name type="scientific">Treponema pallidum (strain Nichols)</name>
    <dbReference type="NCBI Taxonomy" id="243276"/>
    <lineage>
        <taxon>Bacteria</taxon>
        <taxon>Pseudomonadati</taxon>
        <taxon>Spirochaetota</taxon>
        <taxon>Spirochaetia</taxon>
        <taxon>Spirochaetales</taxon>
        <taxon>Treponemataceae</taxon>
        <taxon>Treponema</taxon>
    </lineage>
</organism>